<accession>O60516</accession>
<gene>
    <name type="primary">EIF4EBP3</name>
</gene>
<sequence length="100" mass="10873">MSTSTSCPIPGGRDQLPDCYSTTPGGTLYATTPGGTRIIYDRKFLLECKNSPIARTPPCCLPQIPGVTTPPTAPLSKLEELKEQETEEEIPDDAQFEMDI</sequence>
<proteinExistence type="evidence at protein level"/>
<feature type="chain" id="PRO_0000190518" description="Eukaryotic translation initiation factor 4E-binding protein 3">
    <location>
        <begin position="1"/>
        <end position="100"/>
    </location>
</feature>
<feature type="region of interest" description="Disordered" evidence="2">
    <location>
        <begin position="81"/>
        <end position="100"/>
    </location>
</feature>
<feature type="short sequence motif" description="YXXXXLphi motif" evidence="4">
    <location>
        <begin position="40"/>
        <end position="46"/>
    </location>
</feature>
<feature type="short sequence motif" description="TOS motif" evidence="1">
    <location>
        <begin position="96"/>
        <end position="100"/>
    </location>
</feature>
<feature type="compositionally biased region" description="Acidic residues" evidence="2">
    <location>
        <begin position="85"/>
        <end position="100"/>
    </location>
</feature>
<feature type="mutagenesis site" description="Loss of interaction with EIF4E." evidence="4">
    <original>Y</original>
    <variation>A</variation>
    <location>
        <position position="40"/>
    </location>
</feature>
<feature type="mutagenesis site" description="Loss of interaction with EIF4E." evidence="4">
    <original>L</original>
    <variation>A</variation>
    <location>
        <position position="45"/>
    </location>
</feature>
<protein>
    <recommendedName>
        <fullName>Eukaryotic translation initiation factor 4E-binding protein 3</fullName>
        <shortName>4E-BP3</shortName>
        <shortName>eIF4E-binding protein 3</shortName>
    </recommendedName>
</protein>
<organism>
    <name type="scientific">Homo sapiens</name>
    <name type="common">Human</name>
    <dbReference type="NCBI Taxonomy" id="9606"/>
    <lineage>
        <taxon>Eukaryota</taxon>
        <taxon>Metazoa</taxon>
        <taxon>Chordata</taxon>
        <taxon>Craniata</taxon>
        <taxon>Vertebrata</taxon>
        <taxon>Euteleostomi</taxon>
        <taxon>Mammalia</taxon>
        <taxon>Eutheria</taxon>
        <taxon>Euarchontoglires</taxon>
        <taxon>Primates</taxon>
        <taxon>Haplorrhini</taxon>
        <taxon>Catarrhini</taxon>
        <taxon>Hominidae</taxon>
        <taxon>Homo</taxon>
    </lineage>
</organism>
<evidence type="ECO:0000250" key="1">
    <source>
        <dbReference type="UniProtKB" id="Q13541"/>
    </source>
</evidence>
<evidence type="ECO:0000256" key="2">
    <source>
        <dbReference type="SAM" id="MobiDB-lite"/>
    </source>
</evidence>
<evidence type="ECO:0000269" key="3">
    <source>
    </source>
</evidence>
<evidence type="ECO:0000269" key="4">
    <source>
    </source>
</evidence>
<evidence type="ECO:0000305" key="5"/>
<comment type="function">
    <text evidence="1 3">Repressor of translation initiation that regulates EIF4E activity by preventing its assembly into the eIF4F complex: the hypophosphorylated form competes with EIF4G1/EIF4G3 and strongly binds to EIF4E, leading to repression of translation. In contrast, the hyperphosphorylated form dissociates from EIF4E, allowing interaction between EIF4G1/EIF4G3 and EIF4E, leading to initiation of translation (By similarity). Inhibits EIF4E-mediated mRNA nuclear export (PubMed:22684010).</text>
</comment>
<comment type="subunit">
    <text evidence="3 4">Interacts with EIF4E (PubMed:9593750). Interacts with RPA2 (in unphosphorylated form via N-terminus); the interaction enhances EIF4EBP3-mediated inhibition of EIF4E-mediated mRNA nuclear export (PubMed:22684010).</text>
</comment>
<comment type="interaction">
    <interactant intactId="EBI-746950">
        <id>O60516</id>
    </interactant>
    <interactant intactId="EBI-73440">
        <id>P06730</id>
        <label>EIF4E</label>
    </interactant>
    <organismsDiffer>false</organismsDiffer>
    <experiments>10</experiments>
</comment>
<comment type="interaction">
    <interactant intactId="EBI-746950">
        <id>O60516</id>
    </interactant>
    <interactant intactId="EBI-621404">
        <id>P15927</id>
        <label>RPA2</label>
    </interactant>
    <organismsDiffer>false</organismsDiffer>
    <experiments>3</experiments>
</comment>
<comment type="interaction">
    <interactant intactId="EBI-746950">
        <id>O60516</id>
    </interactant>
    <interactant intactId="EBI-934970">
        <id>Q80ZJ3</id>
        <label>Eif4e2</label>
    </interactant>
    <organismsDiffer>true</organismsDiffer>
    <experiments>2</experiments>
</comment>
<comment type="subcellular location">
    <subcellularLocation>
        <location evidence="3">Cytoplasm</location>
    </subcellularLocation>
    <subcellularLocation>
        <location evidence="3">Nucleus</location>
    </subcellularLocation>
</comment>
<comment type="tissue specificity">
    <text evidence="4">Expression is highest in skeletal muscle, heart, kidney, and pancreas, whereas there is very little expression in brain and thymus.</text>
</comment>
<comment type="PTM">
    <text evidence="4">Phosphorylated.</text>
</comment>
<comment type="similarity">
    <text evidence="5">Belongs to the eIF4E-binding protein family.</text>
</comment>
<name>4EBP3_HUMAN</name>
<reference key="1">
    <citation type="journal article" date="1998" name="J. Biol. Chem.">
        <title>4E-BP3, a new member of the eukaryotic initiation factor 4E-binding protein family.</title>
        <authorList>
            <person name="Poulin F."/>
            <person name="Gingras A.-C."/>
            <person name="Olsen H."/>
            <person name="Chevalier S."/>
            <person name="Sonenberg N."/>
        </authorList>
    </citation>
    <scope>NUCLEOTIDE SEQUENCE [MRNA]</scope>
    <scope>INTERACTION WITH EIF4E</scope>
    <scope>MUTAGENESIS OF TYR-40 AND LEU-45</scope>
    <scope>TISSUE SPECIFICITY</scope>
    <scope>PHOSPHORYLATION</scope>
</reference>
<reference key="2">
    <citation type="journal article" date="2004" name="Genome Res.">
        <title>The status, quality, and expansion of the NIH full-length cDNA project: the Mammalian Gene Collection (MGC).</title>
        <authorList>
            <consortium name="The MGC Project Team"/>
        </authorList>
    </citation>
    <scope>NUCLEOTIDE SEQUENCE [LARGE SCALE MRNA]</scope>
    <source>
        <tissue>Lymph</tissue>
    </source>
</reference>
<reference key="3">
    <citation type="journal article" date="2012" name="FEBS Lett.">
        <title>4E-BP3 regulates eIF4E-mediated nuclear mRNA export and interacts with replication protein A2.</title>
        <authorList>
            <person name="Chen C.C."/>
            <person name="Lee J.C."/>
            <person name="Chang M.C."/>
        </authorList>
    </citation>
    <scope>FUNCTION</scope>
    <scope>INTERACTION WITH RPA2</scope>
    <scope>SUBCELLULAR LOCATION</scope>
</reference>
<keyword id="KW-0963">Cytoplasm</keyword>
<keyword id="KW-0539">Nucleus</keyword>
<keyword id="KW-0597">Phosphoprotein</keyword>
<keyword id="KW-0652">Protein synthesis inhibitor</keyword>
<keyword id="KW-1267">Proteomics identification</keyword>
<keyword id="KW-1185">Reference proteome</keyword>
<keyword id="KW-0810">Translation regulation</keyword>
<dbReference type="EMBL" id="AF038869">
    <property type="protein sequence ID" value="AAC39761.1"/>
    <property type="molecule type" value="mRNA"/>
</dbReference>
<dbReference type="EMBL" id="BC010881">
    <property type="protein sequence ID" value="AAH10881.1"/>
    <property type="molecule type" value="mRNA"/>
</dbReference>
<dbReference type="EMBL" id="BC069293">
    <property type="protein sequence ID" value="AAH69293.1"/>
    <property type="molecule type" value="mRNA"/>
</dbReference>
<dbReference type="EMBL" id="BC073751">
    <property type="protein sequence ID" value="AAH73751.1"/>
    <property type="molecule type" value="mRNA"/>
</dbReference>
<dbReference type="CCDS" id="CCDS4226.1"/>
<dbReference type="RefSeq" id="NP_003723.1">
    <property type="nucleotide sequence ID" value="NM_003732.3"/>
</dbReference>
<dbReference type="SMR" id="O60516"/>
<dbReference type="BioGRID" id="114190">
    <property type="interactions" value="10"/>
</dbReference>
<dbReference type="ELM" id="O60516"/>
<dbReference type="FunCoup" id="O60516">
    <property type="interactions" value="50"/>
</dbReference>
<dbReference type="IntAct" id="O60516">
    <property type="interactions" value="6"/>
</dbReference>
<dbReference type="MINT" id="O60516"/>
<dbReference type="STRING" id="9606.ENSP00000308472"/>
<dbReference type="iPTMnet" id="O60516"/>
<dbReference type="PhosphoSitePlus" id="O60516"/>
<dbReference type="BioMuta" id="EIF4EBP3"/>
<dbReference type="jPOST" id="O60516"/>
<dbReference type="MassIVE" id="O60516"/>
<dbReference type="PaxDb" id="9606-ENSP00000308472"/>
<dbReference type="PeptideAtlas" id="O60516"/>
<dbReference type="ProteomicsDB" id="49454"/>
<dbReference type="Antibodypedia" id="34915">
    <property type="antibodies" value="134 antibodies from 17 providers"/>
</dbReference>
<dbReference type="DNASU" id="8637"/>
<dbReference type="Ensembl" id="ENST00000310331.3">
    <property type="protein sequence ID" value="ENSP00000308472.2"/>
    <property type="gene ID" value="ENSG00000243056.2"/>
</dbReference>
<dbReference type="GeneID" id="8637"/>
<dbReference type="KEGG" id="hsa:8637"/>
<dbReference type="MANE-Select" id="ENST00000310331.3">
    <property type="protein sequence ID" value="ENSP00000308472.2"/>
    <property type="RefSeq nucleotide sequence ID" value="NM_003732.3"/>
    <property type="RefSeq protein sequence ID" value="NP_003723.1"/>
</dbReference>
<dbReference type="UCSC" id="uc003lfy.1">
    <property type="organism name" value="human"/>
</dbReference>
<dbReference type="AGR" id="HGNC:3290"/>
<dbReference type="CTD" id="8637"/>
<dbReference type="DisGeNET" id="8637"/>
<dbReference type="GeneCards" id="EIF4EBP3"/>
<dbReference type="HGNC" id="HGNC:3290">
    <property type="gene designation" value="EIF4EBP3"/>
</dbReference>
<dbReference type="HPA" id="ENSG00000243056">
    <property type="expression patterns" value="Low tissue specificity"/>
</dbReference>
<dbReference type="MIM" id="603483">
    <property type="type" value="gene"/>
</dbReference>
<dbReference type="neXtProt" id="NX_O60516"/>
<dbReference type="OpenTargets" id="ENSG00000243056"/>
<dbReference type="PharmGKB" id="PA27718"/>
<dbReference type="VEuPathDB" id="HostDB:ENSG00000243056"/>
<dbReference type="eggNOG" id="ENOG502S03G">
    <property type="taxonomic scope" value="Eukaryota"/>
</dbReference>
<dbReference type="GeneTree" id="ENSGT00940000163328"/>
<dbReference type="HOGENOM" id="CLU_111706_0_0_1"/>
<dbReference type="InParanoid" id="O60516"/>
<dbReference type="OMA" id="KQAKSCP"/>
<dbReference type="OrthoDB" id="19729at2759"/>
<dbReference type="PAN-GO" id="O60516">
    <property type="GO annotations" value="3 GO annotations based on evolutionary models"/>
</dbReference>
<dbReference type="PhylomeDB" id="O60516"/>
<dbReference type="TreeFam" id="TF101530"/>
<dbReference type="PathwayCommons" id="O60516"/>
<dbReference type="SignaLink" id="O60516"/>
<dbReference type="SIGNOR" id="O60516"/>
<dbReference type="BioGRID-ORCS" id="8637">
    <property type="hits" value="9 hits in 1151 CRISPR screens"/>
</dbReference>
<dbReference type="GeneWiki" id="EIF4EBP3"/>
<dbReference type="GenomeRNAi" id="8637"/>
<dbReference type="Pharos" id="O60516">
    <property type="development level" value="Tbio"/>
</dbReference>
<dbReference type="PRO" id="PR:O60516"/>
<dbReference type="Proteomes" id="UP000005640">
    <property type="component" value="Chromosome 5"/>
</dbReference>
<dbReference type="RNAct" id="O60516">
    <property type="molecule type" value="protein"/>
</dbReference>
<dbReference type="Bgee" id="ENSG00000243056">
    <property type="expression patterns" value="Expressed in right uterine tube and 94 other cell types or tissues"/>
</dbReference>
<dbReference type="GO" id="GO:0005737">
    <property type="term" value="C:cytoplasm"/>
    <property type="evidence" value="ECO:0000318"/>
    <property type="project" value="GO_Central"/>
</dbReference>
<dbReference type="GO" id="GO:0016281">
    <property type="term" value="C:eukaryotic translation initiation factor 4F complex"/>
    <property type="evidence" value="ECO:0000303"/>
    <property type="project" value="UniProtKB"/>
</dbReference>
<dbReference type="GO" id="GO:0016020">
    <property type="term" value="C:membrane"/>
    <property type="evidence" value="ECO:0007005"/>
    <property type="project" value="UniProtKB"/>
</dbReference>
<dbReference type="GO" id="GO:0005634">
    <property type="term" value="C:nucleus"/>
    <property type="evidence" value="ECO:0007669"/>
    <property type="project" value="UniProtKB-SubCell"/>
</dbReference>
<dbReference type="GO" id="GO:0008190">
    <property type="term" value="F:eukaryotic initiation factor 4E binding"/>
    <property type="evidence" value="ECO:0000318"/>
    <property type="project" value="GO_Central"/>
</dbReference>
<dbReference type="GO" id="GO:0030371">
    <property type="term" value="F:translation repressor activity"/>
    <property type="evidence" value="ECO:0000303"/>
    <property type="project" value="UniProtKB"/>
</dbReference>
<dbReference type="GO" id="GO:0045947">
    <property type="term" value="P:negative regulation of translational initiation"/>
    <property type="evidence" value="ECO:0000318"/>
    <property type="project" value="GO_Central"/>
</dbReference>
<dbReference type="InterPro" id="IPR008606">
    <property type="entry name" value="EIF4EBP"/>
</dbReference>
<dbReference type="PANTHER" id="PTHR12669">
    <property type="entry name" value="EUKARYOTIC TRANSLATION INITIATION FACTOR 4E-BINDING PROTEIN"/>
    <property type="match status" value="1"/>
</dbReference>
<dbReference type="PANTHER" id="PTHR12669:SF5">
    <property type="entry name" value="EUKARYOTIC TRANSLATION INITIATION FACTOR 4E-BINDING PROTEIN 3"/>
    <property type="match status" value="1"/>
</dbReference>
<dbReference type="Pfam" id="PF05456">
    <property type="entry name" value="eIF_4EBP"/>
    <property type="match status" value="1"/>
</dbReference>